<sequence>MNTDDVLAVFREAGAILEGHFILTSGLRSPVFLQKARVFMHADKTEKLCKALAEKIRAADLGPIDYVVGPAIGGLIPSYETSRHLGVPSVWVERENGVFRLRRFDVPKGARVVIVEDIVTTGLSIRETIDCMKDLGIEVVAAACIVDRSAGKADVGTRLISLAEYEVPAYPADKLPPELAAIPAVKPGSRNI</sequence>
<organism>
    <name type="scientific">Brucella melitensis biotype 1 (strain ATCC 23456 / CCUG 17765 / NCTC 10094 / 16M)</name>
    <dbReference type="NCBI Taxonomy" id="224914"/>
    <lineage>
        <taxon>Bacteria</taxon>
        <taxon>Pseudomonadati</taxon>
        <taxon>Pseudomonadota</taxon>
        <taxon>Alphaproteobacteria</taxon>
        <taxon>Hyphomicrobiales</taxon>
        <taxon>Brucellaceae</taxon>
        <taxon>Brucella/Ochrobactrum group</taxon>
        <taxon>Brucella</taxon>
    </lineage>
</organism>
<accession>P65910</accession>
<accession>Q8YG66</accession>
<protein>
    <recommendedName>
        <fullName evidence="1">Orotate phosphoribosyltransferase</fullName>
        <shortName evidence="1">OPRT</shortName>
        <shortName evidence="1">OPRTase</shortName>
        <ecNumber evidence="1">2.4.2.10</ecNumber>
    </recommendedName>
</protein>
<dbReference type="EC" id="2.4.2.10" evidence="1"/>
<dbReference type="EMBL" id="AE008917">
    <property type="protein sequence ID" value="AAL52476.1"/>
    <property type="molecule type" value="Genomic_DNA"/>
</dbReference>
<dbReference type="PIR" id="AI3413">
    <property type="entry name" value="AI3413"/>
</dbReference>
<dbReference type="RefSeq" id="WP_002963797.1">
    <property type="nucleotide sequence ID" value="NZ_GG703778.1"/>
</dbReference>
<dbReference type="SMR" id="P65910"/>
<dbReference type="GeneID" id="97534018"/>
<dbReference type="KEGG" id="bme:BMEI1295"/>
<dbReference type="KEGG" id="bmel:DK63_110"/>
<dbReference type="PATRIC" id="fig|224914.52.peg.115"/>
<dbReference type="eggNOG" id="COG0461">
    <property type="taxonomic scope" value="Bacteria"/>
</dbReference>
<dbReference type="PhylomeDB" id="P65910"/>
<dbReference type="UniPathway" id="UPA00070">
    <property type="reaction ID" value="UER00119"/>
</dbReference>
<dbReference type="Proteomes" id="UP000000419">
    <property type="component" value="Chromosome I"/>
</dbReference>
<dbReference type="GO" id="GO:0000287">
    <property type="term" value="F:magnesium ion binding"/>
    <property type="evidence" value="ECO:0007669"/>
    <property type="project" value="UniProtKB-UniRule"/>
</dbReference>
<dbReference type="GO" id="GO:0004588">
    <property type="term" value="F:orotate phosphoribosyltransferase activity"/>
    <property type="evidence" value="ECO:0007669"/>
    <property type="project" value="UniProtKB-UniRule"/>
</dbReference>
<dbReference type="GO" id="GO:0044205">
    <property type="term" value="P:'de novo' UMP biosynthetic process"/>
    <property type="evidence" value="ECO:0007669"/>
    <property type="project" value="UniProtKB-UniRule"/>
</dbReference>
<dbReference type="GO" id="GO:0019856">
    <property type="term" value="P:pyrimidine nucleobase biosynthetic process"/>
    <property type="evidence" value="ECO:0007669"/>
    <property type="project" value="InterPro"/>
</dbReference>
<dbReference type="CDD" id="cd06223">
    <property type="entry name" value="PRTases_typeI"/>
    <property type="match status" value="1"/>
</dbReference>
<dbReference type="Gene3D" id="3.40.50.2020">
    <property type="match status" value="1"/>
</dbReference>
<dbReference type="HAMAP" id="MF_01208">
    <property type="entry name" value="PyrE"/>
    <property type="match status" value="1"/>
</dbReference>
<dbReference type="InterPro" id="IPR023031">
    <property type="entry name" value="OPRT"/>
</dbReference>
<dbReference type="InterPro" id="IPR006273">
    <property type="entry name" value="Orotate_PRibTrfase_bac"/>
</dbReference>
<dbReference type="InterPro" id="IPR000836">
    <property type="entry name" value="PRibTrfase_dom"/>
</dbReference>
<dbReference type="InterPro" id="IPR029057">
    <property type="entry name" value="PRTase-like"/>
</dbReference>
<dbReference type="NCBIfam" id="TIGR01367">
    <property type="entry name" value="pyrE_Therm"/>
    <property type="match status" value="1"/>
</dbReference>
<dbReference type="PANTHER" id="PTHR19278">
    <property type="entry name" value="OROTATE PHOSPHORIBOSYLTRANSFERASE"/>
    <property type="match status" value="1"/>
</dbReference>
<dbReference type="PANTHER" id="PTHR19278:SF9">
    <property type="entry name" value="URIDINE 5'-MONOPHOSPHATE SYNTHASE"/>
    <property type="match status" value="1"/>
</dbReference>
<dbReference type="Pfam" id="PF00156">
    <property type="entry name" value="Pribosyltran"/>
    <property type="match status" value="1"/>
</dbReference>
<dbReference type="SUPFAM" id="SSF53271">
    <property type="entry name" value="PRTase-like"/>
    <property type="match status" value="1"/>
</dbReference>
<dbReference type="PROSITE" id="PS00103">
    <property type="entry name" value="PUR_PYR_PR_TRANSFER"/>
    <property type="match status" value="1"/>
</dbReference>
<feature type="chain" id="PRO_0000110679" description="Orotate phosphoribosyltransferase">
    <location>
        <begin position="1"/>
        <end position="192"/>
    </location>
</feature>
<feature type="binding site" evidence="1">
    <location>
        <begin position="116"/>
        <end position="124"/>
    </location>
    <ligand>
        <name>5-phospho-alpha-D-ribose 1-diphosphate</name>
        <dbReference type="ChEBI" id="CHEBI:58017"/>
    </ligand>
</feature>
<feature type="binding site" evidence="1">
    <location>
        <position position="120"/>
    </location>
    <ligand>
        <name>orotate</name>
        <dbReference type="ChEBI" id="CHEBI:30839"/>
    </ligand>
</feature>
<feature type="binding site" evidence="1">
    <location>
        <position position="148"/>
    </location>
    <ligand>
        <name>orotate</name>
        <dbReference type="ChEBI" id="CHEBI:30839"/>
    </ligand>
</feature>
<keyword id="KW-0328">Glycosyltransferase</keyword>
<keyword id="KW-0460">Magnesium</keyword>
<keyword id="KW-0665">Pyrimidine biosynthesis</keyword>
<keyword id="KW-0808">Transferase</keyword>
<evidence type="ECO:0000255" key="1">
    <source>
        <dbReference type="HAMAP-Rule" id="MF_01208"/>
    </source>
</evidence>
<gene>
    <name evidence="1" type="primary">pyrE</name>
    <name type="ordered locus">BMEI1295</name>
</gene>
<name>PYRE_BRUME</name>
<reference key="1">
    <citation type="journal article" date="2002" name="Proc. Natl. Acad. Sci. U.S.A.">
        <title>The genome sequence of the facultative intracellular pathogen Brucella melitensis.</title>
        <authorList>
            <person name="DelVecchio V.G."/>
            <person name="Kapatral V."/>
            <person name="Redkar R.J."/>
            <person name="Patra G."/>
            <person name="Mujer C."/>
            <person name="Los T."/>
            <person name="Ivanova N."/>
            <person name="Anderson I."/>
            <person name="Bhattacharyya A."/>
            <person name="Lykidis A."/>
            <person name="Reznik G."/>
            <person name="Jablonski L."/>
            <person name="Larsen N."/>
            <person name="D'Souza M."/>
            <person name="Bernal A."/>
            <person name="Mazur M."/>
            <person name="Goltsman E."/>
            <person name="Selkov E."/>
            <person name="Elzer P.H."/>
            <person name="Hagius S."/>
            <person name="O'Callaghan D."/>
            <person name="Letesson J.-J."/>
            <person name="Haselkorn R."/>
            <person name="Kyrpides N.C."/>
            <person name="Overbeek R."/>
        </authorList>
    </citation>
    <scope>NUCLEOTIDE SEQUENCE [LARGE SCALE GENOMIC DNA]</scope>
    <source>
        <strain>ATCC 23456 / CCUG 17765 / NCTC 10094 / 16M</strain>
    </source>
</reference>
<comment type="function">
    <text evidence="1">Catalyzes the transfer of a ribosyl phosphate group from 5-phosphoribose 1-diphosphate to orotate, leading to the formation of orotidine monophosphate (OMP).</text>
</comment>
<comment type="catalytic activity">
    <reaction evidence="1">
        <text>orotidine 5'-phosphate + diphosphate = orotate + 5-phospho-alpha-D-ribose 1-diphosphate</text>
        <dbReference type="Rhea" id="RHEA:10380"/>
        <dbReference type="ChEBI" id="CHEBI:30839"/>
        <dbReference type="ChEBI" id="CHEBI:33019"/>
        <dbReference type="ChEBI" id="CHEBI:57538"/>
        <dbReference type="ChEBI" id="CHEBI:58017"/>
        <dbReference type="EC" id="2.4.2.10"/>
    </reaction>
</comment>
<comment type="cofactor">
    <cofactor evidence="1">
        <name>Mg(2+)</name>
        <dbReference type="ChEBI" id="CHEBI:18420"/>
    </cofactor>
</comment>
<comment type="pathway">
    <text evidence="1">Pyrimidine metabolism; UMP biosynthesis via de novo pathway; UMP from orotate: step 1/2.</text>
</comment>
<comment type="subunit">
    <text evidence="1">Homodimer.</text>
</comment>
<comment type="similarity">
    <text evidence="1">Belongs to the purine/pyrimidine phosphoribosyltransferase family. PyrE subfamily.</text>
</comment>
<proteinExistence type="inferred from homology"/>